<reference key="1">
    <citation type="journal article" date="2001" name="Arch. Virol.">
        <title>The relative infectivities and genomic characterisation of three distinct mastreviruses from South Africa.</title>
        <authorList>
            <person name="Schnippenkoetter W.H."/>
            <person name="Martin D.P."/>
            <person name="Hughes F.L."/>
            <person name="Fyvie M."/>
            <person name="Willment J.A."/>
            <person name="James D."/>
            <person name="von Wechmar M.B."/>
            <person name="Rybicki E.P."/>
        </authorList>
    </citation>
    <scope>NUCLEOTIDE SEQUENCE [GENOMIC DNA]</scope>
</reference>
<proteinExistence type="inferred from homology"/>
<keyword id="KW-1043">Host membrane</keyword>
<keyword id="KW-0472">Membrane</keyword>
<keyword id="KW-0812">Transmembrane</keyword>
<keyword id="KW-1133">Transmembrane helix</keyword>
<keyword id="KW-0813">Transport</keyword>
<keyword id="KW-0916">Viral movement protein</keyword>
<protein>
    <recommendedName>
        <fullName>Movement protein</fullName>
        <shortName>MP</shortName>
    </recommendedName>
</protein>
<evidence type="ECO:0000250" key="1"/>
<evidence type="ECO:0000255" key="2"/>
<evidence type="ECO:0000256" key="3">
    <source>
        <dbReference type="SAM" id="MobiDB-lite"/>
    </source>
</evidence>
<evidence type="ECO:0000305" key="4"/>
<name>MP_MSVSE</name>
<organismHost>
    <name type="scientific">Avena sativa</name>
    <name type="common">Oat</name>
    <dbReference type="NCBI Taxonomy" id="4498"/>
</organismHost>
<organismHost>
    <name type="scientific">Axonopus compressus</name>
    <dbReference type="NCBI Taxonomy" id="217170"/>
</organismHost>
<organismHost>
    <name type="scientific">Cenchrus americanus</name>
    <name type="common">Pearl millet</name>
    <name type="synonym">Pennisetum glaucum</name>
    <dbReference type="NCBI Taxonomy" id="4543"/>
</organismHost>
<organismHost>
    <name type="scientific">Cenchrus polystachios</name>
    <dbReference type="NCBI Taxonomy" id="281129"/>
</organismHost>
<organismHost>
    <name type="scientific">Coix lacryma-jobi</name>
    <name type="common">Job's tears</name>
    <dbReference type="NCBI Taxonomy" id="4505"/>
</organismHost>
<organismHost>
    <name type="scientific">Dactyloctenium aegyptium</name>
    <dbReference type="NCBI Taxonomy" id="270102"/>
</organismHost>
<organismHost>
    <name type="scientific">Digitaria</name>
    <dbReference type="NCBI Taxonomy" id="66017"/>
</organismHost>
<organismHost>
    <name type="scientific">Echinochloa colona</name>
    <dbReference type="NCBI Taxonomy" id="90396"/>
</organismHost>
<organismHost>
    <name type="scientific">Eleusine coracana</name>
    <name type="common">Indian finger millet</name>
    <name type="synonym">Ragi</name>
    <dbReference type="NCBI Taxonomy" id="4511"/>
</organismHost>
<organismHost>
    <name type="scientific">Eleusine indica</name>
    <name type="common">Goosegrass</name>
    <name type="synonym">Cynosurus indicus</name>
    <dbReference type="NCBI Taxonomy" id="29674"/>
</organismHost>
<organismHost>
    <name type="scientific">Hordeum vulgare</name>
    <name type="common">Barley</name>
    <dbReference type="NCBI Taxonomy" id="4513"/>
</organismHost>
<organismHost>
    <name type="scientific">Megathyrsus maximus</name>
    <dbReference type="NCBI Taxonomy" id="59788"/>
</organismHost>
<organismHost>
    <name type="scientific">Melinis repens</name>
    <name type="common">Red Natal grass</name>
    <name type="synonym">Rhynchelytrum repens</name>
    <dbReference type="NCBI Taxonomy" id="29709"/>
</organismHost>
<organismHost>
    <name type="scientific">Oryza glaberrima</name>
    <name type="common">African rice</name>
    <dbReference type="NCBI Taxonomy" id="4538"/>
</organismHost>
<organismHost>
    <name type="scientific">Oryza sativa</name>
    <name type="common">Rice</name>
    <dbReference type="NCBI Taxonomy" id="4530"/>
</organismHost>
<organismHost>
    <name type="scientific">Paspalum conjugatum</name>
    <name type="common">Hilo grass</name>
    <dbReference type="NCBI Taxonomy" id="158143"/>
</organismHost>
<organismHost>
    <name type="scientific">Paspalum notatum</name>
    <name type="common">Bahia grass</name>
    <dbReference type="NCBI Taxonomy" id="147272"/>
</organismHost>
<organismHost>
    <name type="scientific">Paspalum scrobiculatum</name>
    <dbReference type="NCBI Taxonomy" id="173849"/>
</organismHost>
<organismHost>
    <name type="scientific">Rottboellia cochinchinensis</name>
    <dbReference type="NCBI Taxonomy" id="300125"/>
</organismHost>
<organismHost>
    <name type="scientific">Saccharum officinarum</name>
    <name type="common">Sugarcane</name>
    <dbReference type="NCBI Taxonomy" id="4547"/>
</organismHost>
<organismHost>
    <name type="scientific">Setaria barbata</name>
    <dbReference type="NCBI Taxonomy" id="192628"/>
</organismHost>
<organismHost>
    <name type="scientific">Triticum aestivum</name>
    <name type="common">Wheat</name>
    <dbReference type="NCBI Taxonomy" id="4565"/>
</organismHost>
<organismHost>
    <name type="scientific">Urochloa deflexa</name>
    <dbReference type="NCBI Taxonomy" id="240436"/>
</organismHost>
<organismHost>
    <name type="scientific">Zea mays</name>
    <name type="common">Maize</name>
    <dbReference type="NCBI Taxonomy" id="4577"/>
</organismHost>
<organism>
    <name type="scientific">Maize streak virus genotype C (isolate Set)</name>
    <name type="common">MSV</name>
    <dbReference type="NCBI Taxonomy" id="268344"/>
    <lineage>
        <taxon>Viruses</taxon>
        <taxon>Monodnaviria</taxon>
        <taxon>Shotokuvirae</taxon>
        <taxon>Cressdnaviricota</taxon>
        <taxon>Repensiviricetes</taxon>
        <taxon>Geplafuvirales</taxon>
        <taxon>Geminiviridae</taxon>
        <taxon>Mastrevirus</taxon>
        <taxon>Maize streak virus</taxon>
    </lineage>
</organism>
<comment type="function">
    <text>Involved in the viral transport within, and between cells.</text>
</comment>
<comment type="subunit">
    <text evidence="1">Interacts with the capsid protein (CP). Part of a MP-CP-viral DNA complex (By similarity).</text>
</comment>
<comment type="subcellular location">
    <subcellularLocation>
        <location evidence="4">Host membrane</location>
        <topology evidence="4">Single-pass membrane protein</topology>
    </subcellularLocation>
</comment>
<comment type="similarity">
    <text evidence="4">Belongs to the mastrevirus movement protein family.</text>
</comment>
<feature type="chain" id="PRO_0000316927" description="Movement protein">
    <location>
        <begin position="1"/>
        <end position="101"/>
    </location>
</feature>
<feature type="transmembrane region" description="Helical" evidence="2">
    <location>
        <begin position="30"/>
        <end position="50"/>
    </location>
</feature>
<feature type="region of interest" description="Disordered" evidence="3">
    <location>
        <begin position="80"/>
        <end position="101"/>
    </location>
</feature>
<feature type="compositionally biased region" description="Pro residues" evidence="3">
    <location>
        <begin position="90"/>
        <end position="101"/>
    </location>
</feature>
<dbReference type="EMBL" id="AF007881">
    <property type="protein sequence ID" value="AAB63454.1"/>
    <property type="molecule type" value="Genomic_DNA"/>
</dbReference>
<dbReference type="SMR" id="O40984"/>
<dbReference type="Proteomes" id="UP000008872">
    <property type="component" value="Genome"/>
</dbReference>
<dbReference type="GO" id="GO:0033644">
    <property type="term" value="C:host cell membrane"/>
    <property type="evidence" value="ECO:0007669"/>
    <property type="project" value="UniProtKB-SubCell"/>
</dbReference>
<dbReference type="GO" id="GO:0016020">
    <property type="term" value="C:membrane"/>
    <property type="evidence" value="ECO:0007669"/>
    <property type="project" value="UniProtKB-KW"/>
</dbReference>
<dbReference type="GO" id="GO:0046740">
    <property type="term" value="P:transport of virus in host, cell to cell"/>
    <property type="evidence" value="ECO:0007669"/>
    <property type="project" value="UniProtKB-KW"/>
</dbReference>
<dbReference type="InterPro" id="IPR002621">
    <property type="entry name" value="Gemini_mov"/>
</dbReference>
<dbReference type="Pfam" id="PF01708">
    <property type="entry name" value="Gemini_mov"/>
    <property type="match status" value="1"/>
</dbReference>
<sequence length="101" mass="11015">MDPQSAIYTLPRVPTAAPTTGGVSWSHVGEVAILSFVALICIYLLYLWVLRDLILVLKARRGRSTEELIFGSEAVDRRHPIPNTLEPTAPVHPGPFVPGQG</sequence>
<accession>O40984</accession>
<gene>
    <name type="ORF">V2</name>
</gene>